<evidence type="ECO:0000250" key="1"/>
<evidence type="ECO:0000250" key="2">
    <source>
        <dbReference type="UniProtKB" id="Q96SD1"/>
    </source>
</evidence>
<evidence type="ECO:0000256" key="3">
    <source>
        <dbReference type="SAM" id="MobiDB-lite"/>
    </source>
</evidence>
<evidence type="ECO:0000269" key="4">
    <source>
    </source>
</evidence>
<evidence type="ECO:0000269" key="5">
    <source>
    </source>
</evidence>
<evidence type="ECO:0000269" key="6">
    <source>
    </source>
</evidence>
<evidence type="ECO:0000303" key="7">
    <source>
    </source>
</evidence>
<evidence type="ECO:0000303" key="8">
    <source>
    </source>
</evidence>
<evidence type="ECO:0000305" key="9"/>
<evidence type="ECO:0007744" key="10">
    <source>
    </source>
</evidence>
<dbReference type="EC" id="3.1.-.-"/>
<dbReference type="EMBL" id="AF387731">
    <property type="protein sequence ID" value="AAM89119.1"/>
    <property type="molecule type" value="mRNA"/>
</dbReference>
<dbReference type="EMBL" id="AK037126">
    <property type="protein sequence ID" value="BAC29713.1"/>
    <property type="molecule type" value="mRNA"/>
</dbReference>
<dbReference type="EMBL" id="AK052369">
    <property type="protein sequence ID" value="BAC34960.1"/>
    <property type="molecule type" value="mRNA"/>
</dbReference>
<dbReference type="EMBL" id="AK088810">
    <property type="protein sequence ID" value="BAC40586.1"/>
    <property type="molecule type" value="mRNA"/>
</dbReference>
<dbReference type="EMBL" id="AL732620">
    <property type="status" value="NOT_ANNOTATED_CDS"/>
    <property type="molecule type" value="Genomic_DNA"/>
</dbReference>
<dbReference type="CCDS" id="CCDS15649.1">
    <molecule id="Q8K4J0-2"/>
</dbReference>
<dbReference type="CCDS" id="CCDS15650.1">
    <molecule id="Q8K4J0-1"/>
</dbReference>
<dbReference type="CCDS" id="CCDS79728.1">
    <molecule id="Q8K4J0-3"/>
</dbReference>
<dbReference type="RefSeq" id="NP_001103684.1">
    <property type="nucleotide sequence ID" value="NM_001110214.1"/>
</dbReference>
<dbReference type="RefSeq" id="NP_001289603.1">
    <molecule id="Q8K4J0-3"/>
    <property type="nucleotide sequence ID" value="NM_001302674.1"/>
</dbReference>
<dbReference type="RefSeq" id="NP_001289613.1">
    <property type="nucleotide sequence ID" value="NM_001302684.1"/>
</dbReference>
<dbReference type="RefSeq" id="NP_666226.2">
    <molecule id="Q8K4J0-1"/>
    <property type="nucleotide sequence ID" value="NM_146114.3"/>
</dbReference>
<dbReference type="RefSeq" id="NP_783614.1">
    <molecule id="Q8K4J0-2"/>
    <property type="nucleotide sequence ID" value="NM_175683.4"/>
</dbReference>
<dbReference type="RefSeq" id="XP_011237274.1">
    <molecule id="Q8K4J0-3"/>
    <property type="nucleotide sequence ID" value="XM_011238972.2"/>
</dbReference>
<dbReference type="SMR" id="Q8K4J0"/>
<dbReference type="FunCoup" id="Q8K4J0">
    <property type="interactions" value="2937"/>
</dbReference>
<dbReference type="STRING" id="10090.ENSMUSP00000100053"/>
<dbReference type="iPTMnet" id="Q8K4J0"/>
<dbReference type="PhosphoSitePlus" id="Q8K4J0"/>
<dbReference type="SwissPalm" id="Q8K4J0"/>
<dbReference type="jPOST" id="Q8K4J0"/>
<dbReference type="PaxDb" id="10090-ENSMUSP00000100053"/>
<dbReference type="ProteomicsDB" id="279888">
    <molecule id="Q8K4J0-1"/>
</dbReference>
<dbReference type="ProteomicsDB" id="279889">
    <molecule id="Q8K4J0-2"/>
</dbReference>
<dbReference type="ProteomicsDB" id="279890">
    <molecule id="Q8K4J0-3"/>
</dbReference>
<dbReference type="Antibodypedia" id="24989">
    <property type="antibodies" value="359 antibodies from 34 providers"/>
</dbReference>
<dbReference type="DNASU" id="227525"/>
<dbReference type="Ensembl" id="ENSMUST00000061852.12">
    <molecule id="Q8K4J0-2"/>
    <property type="protein sequence ID" value="ENSMUSP00000054300.6"/>
    <property type="gene ID" value="ENSMUSG00000026648.19"/>
</dbReference>
<dbReference type="Ensembl" id="ENSMUST00000102988.10">
    <molecule id="Q8K4J0-1"/>
    <property type="protein sequence ID" value="ENSMUSP00000100053.4"/>
    <property type="gene ID" value="ENSMUSG00000026648.19"/>
</dbReference>
<dbReference type="Ensembl" id="ENSMUST00000115066.8">
    <molecule id="Q8K4J0-3"/>
    <property type="protein sequence ID" value="ENSMUSP00000110718.2"/>
    <property type="gene ID" value="ENSMUSG00000026648.19"/>
</dbReference>
<dbReference type="GeneID" id="227525"/>
<dbReference type="KEGG" id="mmu:227525"/>
<dbReference type="UCSC" id="uc008idz.2">
    <molecule id="Q8K4J0-1"/>
    <property type="organism name" value="mouse"/>
</dbReference>
<dbReference type="UCSC" id="uc008iea.3">
    <molecule id="Q8K4J0-2"/>
    <property type="organism name" value="mouse"/>
</dbReference>
<dbReference type="UCSC" id="uc008ieb.3">
    <molecule id="Q8K4J0-3"/>
    <property type="organism name" value="mouse"/>
</dbReference>
<dbReference type="AGR" id="MGI:2441769"/>
<dbReference type="CTD" id="64421"/>
<dbReference type="MGI" id="MGI:2441769">
    <property type="gene designation" value="Dclre1c"/>
</dbReference>
<dbReference type="VEuPathDB" id="HostDB:ENSMUSG00000026648"/>
<dbReference type="eggNOG" id="KOG1361">
    <property type="taxonomic scope" value="Eukaryota"/>
</dbReference>
<dbReference type="GeneTree" id="ENSGT00940000157779"/>
<dbReference type="HOGENOM" id="CLU_029238_0_0_1"/>
<dbReference type="InParanoid" id="Q8K4J0"/>
<dbReference type="OMA" id="QIHVDKL"/>
<dbReference type="OrthoDB" id="262529at2759"/>
<dbReference type="PhylomeDB" id="Q8K4J0"/>
<dbReference type="TreeFam" id="TF329572"/>
<dbReference type="Reactome" id="R-MMU-5693571">
    <property type="pathway name" value="Nonhomologous End-Joining (NHEJ)"/>
</dbReference>
<dbReference type="BioGRID-ORCS" id="227525">
    <property type="hits" value="4 hits in 113 CRISPR screens"/>
</dbReference>
<dbReference type="ChiTaRS" id="Dclre1c">
    <property type="organism name" value="mouse"/>
</dbReference>
<dbReference type="PRO" id="PR:Q8K4J0"/>
<dbReference type="Proteomes" id="UP000000589">
    <property type="component" value="Chromosome 2"/>
</dbReference>
<dbReference type="RNAct" id="Q8K4J0">
    <property type="molecule type" value="protein"/>
</dbReference>
<dbReference type="Bgee" id="ENSMUSG00000026648">
    <property type="expression patterns" value="Expressed in granulocyte and 96 other cell types or tissues"/>
</dbReference>
<dbReference type="ExpressionAtlas" id="Q8K4J0">
    <property type="expression patterns" value="baseline and differential"/>
</dbReference>
<dbReference type="GO" id="GO:0005794">
    <property type="term" value="C:Golgi apparatus"/>
    <property type="evidence" value="ECO:0007669"/>
    <property type="project" value="Ensembl"/>
</dbReference>
<dbReference type="GO" id="GO:0070419">
    <property type="term" value="C:nonhomologous end joining complex"/>
    <property type="evidence" value="ECO:0000250"/>
    <property type="project" value="UniProtKB"/>
</dbReference>
<dbReference type="GO" id="GO:0005654">
    <property type="term" value="C:nucleoplasm"/>
    <property type="evidence" value="ECO:0007669"/>
    <property type="project" value="Ensembl"/>
</dbReference>
<dbReference type="GO" id="GO:0005634">
    <property type="term" value="C:nucleus"/>
    <property type="evidence" value="ECO:0000305"/>
    <property type="project" value="MGI"/>
</dbReference>
<dbReference type="GO" id="GO:0008409">
    <property type="term" value="F:5'-3' exonuclease activity"/>
    <property type="evidence" value="ECO:0000266"/>
    <property type="project" value="MGI"/>
</dbReference>
<dbReference type="GO" id="GO:0000014">
    <property type="term" value="F:single-stranded DNA endodeoxyribonuclease activity"/>
    <property type="evidence" value="ECO:0000266"/>
    <property type="project" value="MGI"/>
</dbReference>
<dbReference type="GO" id="GO:0002250">
    <property type="term" value="P:adaptive immune response"/>
    <property type="evidence" value="ECO:0007669"/>
    <property type="project" value="UniProtKB-KW"/>
</dbReference>
<dbReference type="GO" id="GO:0030183">
    <property type="term" value="P:B cell differentiation"/>
    <property type="evidence" value="ECO:0000315"/>
    <property type="project" value="MGI"/>
</dbReference>
<dbReference type="GO" id="GO:0051276">
    <property type="term" value="P:chromosome organization"/>
    <property type="evidence" value="ECO:0000315"/>
    <property type="project" value="MGI"/>
</dbReference>
<dbReference type="GO" id="GO:0006310">
    <property type="term" value="P:DNA recombination"/>
    <property type="evidence" value="ECO:0000315"/>
    <property type="project" value="MGI"/>
</dbReference>
<dbReference type="GO" id="GO:0006302">
    <property type="term" value="P:double-strand break repair"/>
    <property type="evidence" value="ECO:0000315"/>
    <property type="project" value="MGI"/>
</dbReference>
<dbReference type="GO" id="GO:0010212">
    <property type="term" value="P:response to ionizing radiation"/>
    <property type="evidence" value="ECO:0000315"/>
    <property type="project" value="MGI"/>
</dbReference>
<dbReference type="GO" id="GO:0000723">
    <property type="term" value="P:telomere maintenance"/>
    <property type="evidence" value="ECO:0000315"/>
    <property type="project" value="MGI"/>
</dbReference>
<dbReference type="GO" id="GO:0033151">
    <property type="term" value="P:V(D)J recombination"/>
    <property type="evidence" value="ECO:0000315"/>
    <property type="project" value="MGI"/>
</dbReference>
<dbReference type="CDD" id="cd16297">
    <property type="entry name" value="artemis-SNM1C-like_MBL-fold"/>
    <property type="match status" value="1"/>
</dbReference>
<dbReference type="FunFam" id="3.40.50.12650:FF:000002">
    <property type="entry name" value="DNA cross-link repair 1C"/>
    <property type="match status" value="1"/>
</dbReference>
<dbReference type="FunFam" id="3.60.15.10:FF:000018">
    <property type="entry name" value="DNA cross-link repair 1C"/>
    <property type="match status" value="1"/>
</dbReference>
<dbReference type="Gene3D" id="3.40.50.12650">
    <property type="match status" value="1"/>
</dbReference>
<dbReference type="Gene3D" id="3.60.15.10">
    <property type="entry name" value="Ribonuclease Z/Hydroxyacylglutathione hydrolase-like"/>
    <property type="match status" value="1"/>
</dbReference>
<dbReference type="InterPro" id="IPR011084">
    <property type="entry name" value="DRMBL"/>
</dbReference>
<dbReference type="InterPro" id="IPR036866">
    <property type="entry name" value="RibonucZ/Hydroxyglut_hydro"/>
</dbReference>
<dbReference type="PANTHER" id="PTHR23240">
    <property type="entry name" value="DNA CROSS-LINK REPAIR PROTEIN PSO2/SNM1-RELATED"/>
    <property type="match status" value="1"/>
</dbReference>
<dbReference type="PANTHER" id="PTHR23240:SF8">
    <property type="entry name" value="PROTEIN ARTEMIS"/>
    <property type="match status" value="1"/>
</dbReference>
<dbReference type="Pfam" id="PF07522">
    <property type="entry name" value="DRMBL"/>
    <property type="match status" value="1"/>
</dbReference>
<dbReference type="SUPFAM" id="SSF56281">
    <property type="entry name" value="Metallo-hydrolase/oxidoreductase"/>
    <property type="match status" value="1"/>
</dbReference>
<organism>
    <name type="scientific">Mus musculus</name>
    <name type="common">Mouse</name>
    <dbReference type="NCBI Taxonomy" id="10090"/>
    <lineage>
        <taxon>Eukaryota</taxon>
        <taxon>Metazoa</taxon>
        <taxon>Chordata</taxon>
        <taxon>Craniata</taxon>
        <taxon>Vertebrata</taxon>
        <taxon>Euteleostomi</taxon>
        <taxon>Mammalia</taxon>
        <taxon>Eutheria</taxon>
        <taxon>Euarchontoglires</taxon>
        <taxon>Glires</taxon>
        <taxon>Rodentia</taxon>
        <taxon>Myomorpha</taxon>
        <taxon>Muroidea</taxon>
        <taxon>Muridae</taxon>
        <taxon>Murinae</taxon>
        <taxon>Mus</taxon>
        <taxon>Mus</taxon>
    </lineage>
</organism>
<accession>Q8K4J0</accession>
<accession>A2AJG6</accession>
<accession>A2AJG7</accession>
<accession>A2AJG8</accession>
<accession>Q8BG72</accession>
<accession>Q8BTT1</accession>
<proteinExistence type="evidence at protein level"/>
<name>DCR1C_MOUSE</name>
<sequence>MSSFQGQMAEYPTISIDRFDRENLKARAYFLSHCHKDHMKGLRAPSLKRRLECSLKVFLYCSPVTKELLLTSPKYRFWENRIITIEIETPTQISLVDEASGEKEEVVVTLLPAGHCPGSVMFLFQGSNGTVLYTGDFRLAKGEASRMELLHSGGRVKDIQSVYLDTTFCDPRFYQIPSREQCLRGILELVRSWVTRSPHHVVWLNCKAAYGYEYLFTNLSEELGVQVHVDKLDMFKNMPDILHHLTTDRNTQIHACRHPKAEECFQWNKLPCGITSQNKTALHTISIKPSTMWFGERTRKTNVIVRTGESSYRACFSFHSSFSEIKDFLSYICPVNVYPNVIPVGLTVDKVMDVLKPLCRSPQSVEPKYKPLGKLKRARTIHLDSEEDDDLFDDPLPTPLRHKVPYQLTLQPELFSMKALPLDQPELRQSPGGCKAESVWSPSLANFIDCEESNSDSGEELETPPPSLQGGLGPSTLVQQNADPDVDIPQWEVFFKRRDEITGECLEHLPSSIETGGSQSPKLCSDSPKLCSDSPKLCSDSDGDSTHISSQNSSQSTHITDQGSQGWDSQCDTVLLSSQEKSGGDSTSLNKGAYKPKLKESISASQIEQDALCPQDTHCDLKSRAEVNGAPCLVELDTLSGRKSPPEKTLLSSTRADSQSSSDFEIPSTPEAELPTPEHLQCLYRKLATGQSIVVEKRKCSLLDS</sequence>
<keyword id="KW-1064">Adaptive immunity</keyword>
<keyword id="KW-0025">Alternative splicing</keyword>
<keyword id="KW-0227">DNA damage</keyword>
<keyword id="KW-0233">DNA recombination</keyword>
<keyword id="KW-0234">DNA repair</keyword>
<keyword id="KW-0255">Endonuclease</keyword>
<keyword id="KW-0269">Exonuclease</keyword>
<keyword id="KW-0378">Hydrolase</keyword>
<keyword id="KW-0391">Immunity</keyword>
<keyword id="KW-0460">Magnesium</keyword>
<keyword id="KW-0540">Nuclease</keyword>
<keyword id="KW-0539">Nucleus</keyword>
<keyword id="KW-0597">Phosphoprotein</keyword>
<keyword id="KW-1185">Reference proteome</keyword>
<keyword id="KW-0705">SCID</keyword>
<gene>
    <name type="primary">Dclre1c</name>
    <name evidence="7" type="synonym">Art</name>
    <name type="synonym">Snm1l</name>
</gene>
<comment type="function">
    <text evidence="4 5 6">Required for V(D)J recombination, the process by which exons encoding the antigen-binding domains of immunoglobulins and T-cell receptor proteins are assembled from individual V, (D), and J gene segments. V(D)J recombination is initiated by the lymphoid specific RAG endonuclease complex, which generates site specific DNA double strand breaks (DSBs). These DSBs present two types of DNA end structures: hairpin sealed coding ends and phosphorylated blunt signal ends. These ends are independently repaired by the non homologous end joining (NHEJ) pathway to form coding and signal joints respectively. This protein likely exhibits single-strand specific 5'-3' exonuclease activity in isolation, and may acquire endonucleolytic activity on 5' and 3' hairpins and overhangs when in a complex with PRKDC. The latter activity may be required specifically for the resolution of closed hairpins prior to the formation of the coding joint. May also be required for the repair of complex DSBs induced by ionizing radiation, which require substantial end-processing prior to religation by NHEJ.</text>
</comment>
<comment type="subunit">
    <text evidence="2">Interacts with LIG4; the interaction is direct. Interacts with ATM. Interacts with BRCA1. Interacts with PRKDC. Interacts with TP53BP1. Also exhibits ATM- and phosphorylation-dependent interaction with the MRN complex, composed of MRE11, RAD50, and NBN.</text>
</comment>
<comment type="subcellular location">
    <subcellularLocation>
        <location evidence="1">Nucleus</location>
    </subcellularLocation>
</comment>
<comment type="alternative products">
    <event type="alternative splicing"/>
    <isoform>
        <id>Q8K4J0-1</id>
        <name>1</name>
        <sequence type="displayed"/>
    </isoform>
    <isoform>
        <id>Q8K4J0-2</id>
        <name>2</name>
        <sequence type="described" ref="VSP_014895 VSP_014896"/>
    </isoform>
    <isoform>
        <id>Q8K4J0-3</id>
        <name>3</name>
        <sequence type="described" ref="VSP_014893 VSP_014894 VSP_014895 VSP_014896"/>
    </isoform>
</comment>
<comment type="PTM">
    <text evidence="1">Phosphorylation on undefined residues by PRKDC may stimulate endonucleolytic activity on 5' and 3' hairpins and overhangs. PRKDC must remain present, even after phosphorylation, for efficient hairpin opening. Also phosphorylated by ATM in response to ionizing radiation (IR) and by ATR in response to ultraviolet (UV) radiation (By similarity).</text>
</comment>
<comment type="miscellaneous">
    <molecule>Isoform 2</molecule>
    <text evidence="9">May be due to an intron retention.</text>
</comment>
<comment type="similarity">
    <text evidence="9">Belongs to the DNA repair metallo-beta-lactamase (DRMBL) family.</text>
</comment>
<reference key="1">
    <citation type="journal article" date="2005" name="J. Immunol.">
        <title>Targeted disruption of the Artemis murine counterpart results in SCID and defective V(D)J recombination that is partially corrected with bone marrow transplantation.</title>
        <authorList>
            <person name="Li L."/>
            <person name="Salido E."/>
            <person name="Zhou Y."/>
            <person name="Bhattacharyya S."/>
            <person name="Yannone S.M."/>
            <person name="Dunn E."/>
            <person name="Meneses J."/>
            <person name="Feeney A.J."/>
            <person name="Cowan M.J."/>
        </authorList>
    </citation>
    <scope>NUCLEOTIDE SEQUENCE [MRNA] (ISOFORM 1)</scope>
    <scope>FUNCTION</scope>
</reference>
<reference key="2">
    <citation type="journal article" date="2005" name="Science">
        <title>The transcriptional landscape of the mammalian genome.</title>
        <authorList>
            <person name="Carninci P."/>
            <person name="Kasukawa T."/>
            <person name="Katayama S."/>
            <person name="Gough J."/>
            <person name="Frith M.C."/>
            <person name="Maeda N."/>
            <person name="Oyama R."/>
            <person name="Ravasi T."/>
            <person name="Lenhard B."/>
            <person name="Wells C."/>
            <person name="Kodzius R."/>
            <person name="Shimokawa K."/>
            <person name="Bajic V.B."/>
            <person name="Brenner S.E."/>
            <person name="Batalov S."/>
            <person name="Forrest A.R."/>
            <person name="Zavolan M."/>
            <person name="Davis M.J."/>
            <person name="Wilming L.G."/>
            <person name="Aidinis V."/>
            <person name="Allen J.E."/>
            <person name="Ambesi-Impiombato A."/>
            <person name="Apweiler R."/>
            <person name="Aturaliya R.N."/>
            <person name="Bailey T.L."/>
            <person name="Bansal M."/>
            <person name="Baxter L."/>
            <person name="Beisel K.W."/>
            <person name="Bersano T."/>
            <person name="Bono H."/>
            <person name="Chalk A.M."/>
            <person name="Chiu K.P."/>
            <person name="Choudhary V."/>
            <person name="Christoffels A."/>
            <person name="Clutterbuck D.R."/>
            <person name="Crowe M.L."/>
            <person name="Dalla E."/>
            <person name="Dalrymple B.P."/>
            <person name="de Bono B."/>
            <person name="Della Gatta G."/>
            <person name="di Bernardo D."/>
            <person name="Down T."/>
            <person name="Engstrom P."/>
            <person name="Fagiolini M."/>
            <person name="Faulkner G."/>
            <person name="Fletcher C.F."/>
            <person name="Fukushima T."/>
            <person name="Furuno M."/>
            <person name="Futaki S."/>
            <person name="Gariboldi M."/>
            <person name="Georgii-Hemming P."/>
            <person name="Gingeras T.R."/>
            <person name="Gojobori T."/>
            <person name="Green R.E."/>
            <person name="Gustincich S."/>
            <person name="Harbers M."/>
            <person name="Hayashi Y."/>
            <person name="Hensch T.K."/>
            <person name="Hirokawa N."/>
            <person name="Hill D."/>
            <person name="Huminiecki L."/>
            <person name="Iacono M."/>
            <person name="Ikeo K."/>
            <person name="Iwama A."/>
            <person name="Ishikawa T."/>
            <person name="Jakt M."/>
            <person name="Kanapin A."/>
            <person name="Katoh M."/>
            <person name="Kawasawa Y."/>
            <person name="Kelso J."/>
            <person name="Kitamura H."/>
            <person name="Kitano H."/>
            <person name="Kollias G."/>
            <person name="Krishnan S.P."/>
            <person name="Kruger A."/>
            <person name="Kummerfeld S.K."/>
            <person name="Kurochkin I.V."/>
            <person name="Lareau L.F."/>
            <person name="Lazarevic D."/>
            <person name="Lipovich L."/>
            <person name="Liu J."/>
            <person name="Liuni S."/>
            <person name="McWilliam S."/>
            <person name="Madan Babu M."/>
            <person name="Madera M."/>
            <person name="Marchionni L."/>
            <person name="Matsuda H."/>
            <person name="Matsuzawa S."/>
            <person name="Miki H."/>
            <person name="Mignone F."/>
            <person name="Miyake S."/>
            <person name="Morris K."/>
            <person name="Mottagui-Tabar S."/>
            <person name="Mulder N."/>
            <person name="Nakano N."/>
            <person name="Nakauchi H."/>
            <person name="Ng P."/>
            <person name="Nilsson R."/>
            <person name="Nishiguchi S."/>
            <person name="Nishikawa S."/>
            <person name="Nori F."/>
            <person name="Ohara O."/>
            <person name="Okazaki Y."/>
            <person name="Orlando V."/>
            <person name="Pang K.C."/>
            <person name="Pavan W.J."/>
            <person name="Pavesi G."/>
            <person name="Pesole G."/>
            <person name="Petrovsky N."/>
            <person name="Piazza S."/>
            <person name="Reed J."/>
            <person name="Reid J.F."/>
            <person name="Ring B.Z."/>
            <person name="Ringwald M."/>
            <person name="Rost B."/>
            <person name="Ruan Y."/>
            <person name="Salzberg S.L."/>
            <person name="Sandelin A."/>
            <person name="Schneider C."/>
            <person name="Schoenbach C."/>
            <person name="Sekiguchi K."/>
            <person name="Semple C.A."/>
            <person name="Seno S."/>
            <person name="Sessa L."/>
            <person name="Sheng Y."/>
            <person name="Shibata Y."/>
            <person name="Shimada H."/>
            <person name="Shimada K."/>
            <person name="Silva D."/>
            <person name="Sinclair B."/>
            <person name="Sperling S."/>
            <person name="Stupka E."/>
            <person name="Sugiura K."/>
            <person name="Sultana R."/>
            <person name="Takenaka Y."/>
            <person name="Taki K."/>
            <person name="Tammoja K."/>
            <person name="Tan S.L."/>
            <person name="Tang S."/>
            <person name="Taylor M.S."/>
            <person name="Tegner J."/>
            <person name="Teichmann S.A."/>
            <person name="Ueda H.R."/>
            <person name="van Nimwegen E."/>
            <person name="Verardo R."/>
            <person name="Wei C.L."/>
            <person name="Yagi K."/>
            <person name="Yamanishi H."/>
            <person name="Zabarovsky E."/>
            <person name="Zhu S."/>
            <person name="Zimmer A."/>
            <person name="Hide W."/>
            <person name="Bult C."/>
            <person name="Grimmond S.M."/>
            <person name="Teasdale R.D."/>
            <person name="Liu E.T."/>
            <person name="Brusic V."/>
            <person name="Quackenbush J."/>
            <person name="Wahlestedt C."/>
            <person name="Mattick J.S."/>
            <person name="Hume D.A."/>
            <person name="Kai C."/>
            <person name="Sasaki D."/>
            <person name="Tomaru Y."/>
            <person name="Fukuda S."/>
            <person name="Kanamori-Katayama M."/>
            <person name="Suzuki M."/>
            <person name="Aoki J."/>
            <person name="Arakawa T."/>
            <person name="Iida J."/>
            <person name="Imamura K."/>
            <person name="Itoh M."/>
            <person name="Kato T."/>
            <person name="Kawaji H."/>
            <person name="Kawagashira N."/>
            <person name="Kawashima T."/>
            <person name="Kojima M."/>
            <person name="Kondo S."/>
            <person name="Konno H."/>
            <person name="Nakano K."/>
            <person name="Ninomiya N."/>
            <person name="Nishio T."/>
            <person name="Okada M."/>
            <person name="Plessy C."/>
            <person name="Shibata K."/>
            <person name="Shiraki T."/>
            <person name="Suzuki S."/>
            <person name="Tagami M."/>
            <person name="Waki K."/>
            <person name="Watahiki A."/>
            <person name="Okamura-Oho Y."/>
            <person name="Suzuki H."/>
            <person name="Kawai J."/>
            <person name="Hayashizaki Y."/>
        </authorList>
    </citation>
    <scope>NUCLEOTIDE SEQUENCE [LARGE SCALE MRNA] (ISOFORMS 2 AND 3)</scope>
    <source>
        <strain>NOD</strain>
        <tissue>Thymus</tissue>
    </source>
</reference>
<reference key="3">
    <citation type="journal article" date="2009" name="PLoS Biol.">
        <title>Lineage-specific biology revealed by a finished genome assembly of the mouse.</title>
        <authorList>
            <person name="Church D.M."/>
            <person name="Goodstadt L."/>
            <person name="Hillier L.W."/>
            <person name="Zody M.C."/>
            <person name="Goldstein S."/>
            <person name="She X."/>
            <person name="Bult C.J."/>
            <person name="Agarwala R."/>
            <person name="Cherry J.L."/>
            <person name="DiCuccio M."/>
            <person name="Hlavina W."/>
            <person name="Kapustin Y."/>
            <person name="Meric P."/>
            <person name="Maglott D."/>
            <person name="Birtle Z."/>
            <person name="Marques A.C."/>
            <person name="Graves T."/>
            <person name="Zhou S."/>
            <person name="Teague B."/>
            <person name="Potamousis K."/>
            <person name="Churas C."/>
            <person name="Place M."/>
            <person name="Herschleb J."/>
            <person name="Runnheim R."/>
            <person name="Forrest D."/>
            <person name="Amos-Landgraf J."/>
            <person name="Schwartz D.C."/>
            <person name="Cheng Z."/>
            <person name="Lindblad-Toh K."/>
            <person name="Eichler E.E."/>
            <person name="Ponting C.P."/>
        </authorList>
    </citation>
    <scope>NUCLEOTIDE SEQUENCE [LARGE SCALE GENOMIC DNA]</scope>
    <source>
        <strain>C57BL/6J</strain>
    </source>
</reference>
<reference key="4">
    <citation type="journal article" date="2002" name="Mol. Cell">
        <title>Leaky Scid phenotype associated with defective V(D)J coding end processing in Artemis-deficient mice.</title>
        <authorList>
            <person name="Rooney S."/>
            <person name="Sekiguchi J."/>
            <person name="Zhu C."/>
            <person name="Cheng H.-L."/>
            <person name="Manis J."/>
            <person name="Whitlow S."/>
            <person name="DeVido J."/>
            <person name="Foy D."/>
            <person name="Chaudhuri J."/>
            <person name="Lombard D."/>
            <person name="Alt F.W."/>
        </authorList>
    </citation>
    <scope>FUNCTION</scope>
</reference>
<reference key="5">
    <citation type="journal article" date="2002" name="Nucleic Acids Res.">
        <title>Metallo-beta-lactamase fold within nucleic acids processing enzymes: the beta-CASP family.</title>
        <authorList>
            <person name="Callebaut I."/>
            <person name="Moshous D."/>
            <person name="Mornon J.-P."/>
            <person name="de Villartay J.-P."/>
        </authorList>
    </citation>
    <scope>DNA REPAIR METALLO-BETA-LACTAMASE FAMILY</scope>
</reference>
<reference key="6">
    <citation type="journal article" date="2003" name="J. Exp. Med.">
        <title>Defective DNA repair and increased genomic instability in Artemis-deficient murine cells.</title>
        <authorList>
            <person name="Rooney S."/>
            <person name="Alt F.W."/>
            <person name="Lombard D."/>
            <person name="Whitlow S."/>
            <person name="Eckersdorff M."/>
            <person name="Fleming J."/>
            <person name="Fugmann S."/>
            <person name="Ferguson D.O."/>
            <person name="Schatz D.G."/>
            <person name="Sekiguchi J."/>
        </authorList>
    </citation>
    <scope>FUNCTION</scope>
</reference>
<reference key="7">
    <citation type="journal article" date="2010" name="Cell">
        <title>A tissue-specific atlas of mouse protein phosphorylation and expression.</title>
        <authorList>
            <person name="Huttlin E.L."/>
            <person name="Jedrychowski M.P."/>
            <person name="Elias J.E."/>
            <person name="Goswami T."/>
            <person name="Rad R."/>
            <person name="Beausoleil S.A."/>
            <person name="Villen J."/>
            <person name="Haas W."/>
            <person name="Sowa M.E."/>
            <person name="Gygi S.P."/>
        </authorList>
    </citation>
    <scope>PHOSPHORYLATION [LARGE SCALE ANALYSIS] AT THR-380 AND SER-385</scope>
    <scope>IDENTIFICATION BY MASS SPECTROMETRY [LARGE SCALE ANALYSIS]</scope>
    <source>
        <tissue>Lung</tissue>
        <tissue>Spleen</tissue>
    </source>
</reference>
<feature type="chain" id="PRO_0000209124" description="Protein artemis">
    <location>
        <begin position="1"/>
        <end position="705"/>
    </location>
</feature>
<feature type="region of interest" description="Disordered" evidence="3">
    <location>
        <begin position="451"/>
        <end position="484"/>
    </location>
</feature>
<feature type="region of interest" description="Disordered" evidence="3">
    <location>
        <begin position="535"/>
        <end position="569"/>
    </location>
</feature>
<feature type="region of interest" description="Disordered" evidence="3">
    <location>
        <begin position="638"/>
        <end position="675"/>
    </location>
</feature>
<feature type="compositionally biased region" description="Acidic residues" evidence="3">
    <location>
        <begin position="451"/>
        <end position="462"/>
    </location>
</feature>
<feature type="compositionally biased region" description="Low complexity" evidence="3">
    <location>
        <begin position="546"/>
        <end position="559"/>
    </location>
</feature>
<feature type="compositionally biased region" description="Polar residues" evidence="3">
    <location>
        <begin position="560"/>
        <end position="569"/>
    </location>
</feature>
<feature type="compositionally biased region" description="Low complexity" evidence="3">
    <location>
        <begin position="652"/>
        <end position="662"/>
    </location>
</feature>
<feature type="modified residue" description="Phosphothreonine" evidence="10">
    <location>
        <position position="380"/>
    </location>
</feature>
<feature type="modified residue" description="Phosphoserine" evidence="10">
    <location>
        <position position="385"/>
    </location>
</feature>
<feature type="modified residue" description="Phosphoserine; by ATM" evidence="2">
    <location>
        <position position="658"/>
    </location>
</feature>
<feature type="splice variant" id="VSP_014893" description="In isoform 3." evidence="8">
    <location>
        <begin position="1"/>
        <end position="130"/>
    </location>
</feature>
<feature type="splice variant" id="VSP_014894" description="In isoform 3." evidence="8">
    <original>VLYTGDFRLAKGEASRMELLHSGG</original>
    <variation>MRLRVRRLQTGKRRSFQNGASALW</variation>
    <location>
        <begin position="131"/>
        <end position="154"/>
    </location>
</feature>
<feature type="splice variant" id="VSP_014895" description="In isoform 2 and isoform 3." evidence="8">
    <original>GECLEHLPSSIETGGSQSPKLCSDSPKLCSDSPKLCSDSDGDSTHISSQNSSQSTHITDQGSQGWDSQCDTVLLSSQEKSGGDSTSLNKGAYKPKLKESIS</original>
    <variation>VDTMIRTPRPRKMKGCGQWSLKMLLQNLEIQEEKHIFENRGWKMAGQVKGSCGLLEGQSSLPTFKLATSLASNSSFWPPWHLHSHAHTQIFTFKKKTKTLL</variation>
    <location>
        <begin position="503"/>
        <end position="603"/>
    </location>
</feature>
<feature type="splice variant" id="VSP_014896" description="In isoform 2 and isoform 3." evidence="8">
    <location>
        <begin position="604"/>
        <end position="705"/>
    </location>
</feature>
<feature type="sequence conflict" description="In Ref. 1; AAM89119." evidence="9" ref="1">
    <original>K</original>
    <variation>Q</variation>
    <location>
        <position position="103"/>
    </location>
</feature>
<feature type="sequence conflict" description="In Ref. 1; AAM89119." evidence="9" ref="1">
    <original>E</original>
    <variation>Q</variation>
    <location>
        <position position="105"/>
    </location>
</feature>
<feature type="sequence conflict" description="In Ref. 1; AAM89119." evidence="9" ref="1">
    <original>V</original>
    <variation>G</variation>
    <location>
        <position position="107"/>
    </location>
</feature>
<feature type="sequence conflict" description="In Ref. 1; AAM89119." evidence="9" ref="1">
    <original>A</original>
    <variation>P</variation>
    <location>
        <position position="113"/>
    </location>
</feature>
<feature type="sequence conflict" description="In Ref. 1; AAM89119." evidence="9" ref="1">
    <original>G</original>
    <variation>R</variation>
    <location>
        <position position="118"/>
    </location>
</feature>
<feature type="sequence conflict" description="In Ref. 1; AAM89119." evidence="9" ref="1">
    <original>M</original>
    <variation>V</variation>
    <location>
        <position position="121"/>
    </location>
</feature>
<protein>
    <recommendedName>
        <fullName evidence="7">Protein artemis</fullName>
        <shortName evidence="7">mArt</shortName>
        <ecNumber>3.1.-.-</ecNumber>
    </recommendedName>
    <alternativeName>
        <fullName>DNA cross-link repair 1C protein</fullName>
    </alternativeName>
    <alternativeName>
        <fullName>SNM1-like protein</fullName>
    </alternativeName>
</protein>